<comment type="function">
    <text evidence="1">Acts as a positive regulator of ciliary hedgehog signaling. Required for centriole stability.</text>
</comment>
<comment type="subunit">
    <text evidence="1">Interacts with TEDC1. Found in a complex with TEDC1, TEDC2, TUBE1 and TUBD1.</text>
</comment>
<comment type="interaction">
    <interactant intactId="EBI-8465456">
        <id>Q7L2K0</id>
    </interactant>
    <interactant intactId="EBI-3044087">
        <id>Q7Z3Y8</id>
        <label>KRT27</label>
    </interactant>
    <organismsDiffer>false</organismsDiffer>
    <experiments>3</experiments>
</comment>
<comment type="interaction">
    <interactant intactId="EBI-8465456">
        <id>Q7L2K0</id>
    </interactant>
    <interactant intactId="EBI-10172290">
        <id>P60409</id>
        <label>KRTAP10-7</label>
    </interactant>
    <organismsDiffer>false</organismsDiffer>
    <experiments>3</experiments>
</comment>
<comment type="interaction">
    <interactant intactId="EBI-8465456">
        <id>Q7L2K0</id>
    </interactant>
    <interactant intactId="EBI-10172052">
        <id>P60411</id>
        <label>KRTAP10-9</label>
    </interactant>
    <organismsDiffer>false</organismsDiffer>
    <experiments>3</experiments>
</comment>
<comment type="interaction">
    <interactant intactId="EBI-8465456">
        <id>Q7L2K0</id>
    </interactant>
    <interactant intactId="EBI-724076">
        <id>Q99750</id>
        <label>MDFI</label>
    </interactant>
    <organismsDiffer>false</organismsDiffer>
    <experiments>3</experiments>
</comment>
<comment type="interaction">
    <interactant intactId="EBI-8465456">
        <id>Q7L2K0</id>
    </interactant>
    <interactant intactId="EBI-1104552">
        <id>Q9NYP9</id>
        <label>MIS18A</label>
    </interactant>
    <organismsDiffer>false</organismsDiffer>
    <experiments>3</experiments>
</comment>
<comment type="interaction">
    <interactant intactId="EBI-8465456">
        <id>Q7L2K0</id>
    </interactant>
    <interactant intactId="EBI-945833">
        <id>Q7Z3S9</id>
        <label>NOTCH2NLA</label>
    </interactant>
    <organismsDiffer>false</organismsDiffer>
    <experiments>3</experiments>
</comment>
<comment type="interaction">
    <interactant intactId="EBI-8465456">
        <id>Q7L2K0</id>
    </interactant>
    <interactant intactId="EBI-3247115">
        <id>Q86SX3</id>
        <label>TEDC1</label>
    </interactant>
    <organismsDiffer>false</organismsDiffer>
    <experiments>2</experiments>
</comment>
<comment type="subcellular location">
    <subcellularLocation>
        <location evidence="1">Cell projection</location>
        <location evidence="1">Cilium</location>
    </subcellularLocation>
    <subcellularLocation>
        <location evidence="1">Cytoplasm</location>
        <location evidence="1">Cytoskeleton</location>
        <location evidence="1">Microtubule organizing center</location>
        <location evidence="1">Centrosome</location>
        <location evidence="1">Centriole</location>
    </subcellularLocation>
</comment>
<comment type="alternative products">
    <event type="alternative splicing"/>
    <isoform>
        <id>Q7L2K0-1</id>
        <name>1</name>
        <sequence type="displayed"/>
    </isoform>
    <isoform>
        <id>Q7L2K0-2</id>
        <name>2</name>
        <sequence type="described" ref="VSP_025086"/>
    </isoform>
    <isoform>
        <id>Q7L2K0-3</id>
        <name>3</name>
        <sequence type="described" ref="VSP_025086 VSP_025087 VSP_025088"/>
    </isoform>
</comment>
<reference key="1">
    <citation type="journal article" date="2004" name="Nat. Genet.">
        <title>Complete sequencing and characterization of 21,243 full-length human cDNAs.</title>
        <authorList>
            <person name="Ota T."/>
            <person name="Suzuki Y."/>
            <person name="Nishikawa T."/>
            <person name="Otsuki T."/>
            <person name="Sugiyama T."/>
            <person name="Irie R."/>
            <person name="Wakamatsu A."/>
            <person name="Hayashi K."/>
            <person name="Sato H."/>
            <person name="Nagai K."/>
            <person name="Kimura K."/>
            <person name="Makita H."/>
            <person name="Sekine M."/>
            <person name="Obayashi M."/>
            <person name="Nishi T."/>
            <person name="Shibahara T."/>
            <person name="Tanaka T."/>
            <person name="Ishii S."/>
            <person name="Yamamoto J."/>
            <person name="Saito K."/>
            <person name="Kawai Y."/>
            <person name="Isono Y."/>
            <person name="Nakamura Y."/>
            <person name="Nagahari K."/>
            <person name="Murakami K."/>
            <person name="Yasuda T."/>
            <person name="Iwayanagi T."/>
            <person name="Wagatsuma M."/>
            <person name="Shiratori A."/>
            <person name="Sudo H."/>
            <person name="Hosoiri T."/>
            <person name="Kaku Y."/>
            <person name="Kodaira H."/>
            <person name="Kondo H."/>
            <person name="Sugawara M."/>
            <person name="Takahashi M."/>
            <person name="Kanda K."/>
            <person name="Yokoi T."/>
            <person name="Furuya T."/>
            <person name="Kikkawa E."/>
            <person name="Omura Y."/>
            <person name="Abe K."/>
            <person name="Kamihara K."/>
            <person name="Katsuta N."/>
            <person name="Sato K."/>
            <person name="Tanikawa M."/>
            <person name="Yamazaki M."/>
            <person name="Ninomiya K."/>
            <person name="Ishibashi T."/>
            <person name="Yamashita H."/>
            <person name="Murakawa K."/>
            <person name="Fujimori K."/>
            <person name="Tanai H."/>
            <person name="Kimata M."/>
            <person name="Watanabe M."/>
            <person name="Hiraoka S."/>
            <person name="Chiba Y."/>
            <person name="Ishida S."/>
            <person name="Ono Y."/>
            <person name="Takiguchi S."/>
            <person name="Watanabe S."/>
            <person name="Yosida M."/>
            <person name="Hotuta T."/>
            <person name="Kusano J."/>
            <person name="Kanehori K."/>
            <person name="Takahashi-Fujii A."/>
            <person name="Hara H."/>
            <person name="Tanase T.-O."/>
            <person name="Nomura Y."/>
            <person name="Togiya S."/>
            <person name="Komai F."/>
            <person name="Hara R."/>
            <person name="Takeuchi K."/>
            <person name="Arita M."/>
            <person name="Imose N."/>
            <person name="Musashino K."/>
            <person name="Yuuki H."/>
            <person name="Oshima A."/>
            <person name="Sasaki N."/>
            <person name="Aotsuka S."/>
            <person name="Yoshikawa Y."/>
            <person name="Matsunawa H."/>
            <person name="Ichihara T."/>
            <person name="Shiohata N."/>
            <person name="Sano S."/>
            <person name="Moriya S."/>
            <person name="Momiyama H."/>
            <person name="Satoh N."/>
            <person name="Takami S."/>
            <person name="Terashima Y."/>
            <person name="Suzuki O."/>
            <person name="Nakagawa S."/>
            <person name="Senoh A."/>
            <person name="Mizoguchi H."/>
            <person name="Goto Y."/>
            <person name="Shimizu F."/>
            <person name="Wakebe H."/>
            <person name="Hishigaki H."/>
            <person name="Watanabe T."/>
            <person name="Sugiyama A."/>
            <person name="Takemoto M."/>
            <person name="Kawakami B."/>
            <person name="Yamazaki M."/>
            <person name="Watanabe K."/>
            <person name="Kumagai A."/>
            <person name="Itakura S."/>
            <person name="Fukuzumi Y."/>
            <person name="Fujimori Y."/>
            <person name="Komiyama M."/>
            <person name="Tashiro H."/>
            <person name="Tanigami A."/>
            <person name="Fujiwara T."/>
            <person name="Ono T."/>
            <person name="Yamada K."/>
            <person name="Fujii Y."/>
            <person name="Ozaki K."/>
            <person name="Hirao M."/>
            <person name="Ohmori Y."/>
            <person name="Kawabata A."/>
            <person name="Hikiji T."/>
            <person name="Kobatake N."/>
            <person name="Inagaki H."/>
            <person name="Ikema Y."/>
            <person name="Okamoto S."/>
            <person name="Okitani R."/>
            <person name="Kawakami T."/>
            <person name="Noguchi S."/>
            <person name="Itoh T."/>
            <person name="Shigeta K."/>
            <person name="Senba T."/>
            <person name="Matsumura K."/>
            <person name="Nakajima Y."/>
            <person name="Mizuno T."/>
            <person name="Morinaga M."/>
            <person name="Sasaki M."/>
            <person name="Togashi T."/>
            <person name="Oyama M."/>
            <person name="Hata H."/>
            <person name="Watanabe M."/>
            <person name="Komatsu T."/>
            <person name="Mizushima-Sugano J."/>
            <person name="Satoh T."/>
            <person name="Shirai Y."/>
            <person name="Takahashi Y."/>
            <person name="Nakagawa K."/>
            <person name="Okumura K."/>
            <person name="Nagase T."/>
            <person name="Nomura N."/>
            <person name="Kikuchi H."/>
            <person name="Masuho Y."/>
            <person name="Yamashita R."/>
            <person name="Nakai K."/>
            <person name="Yada T."/>
            <person name="Nakamura Y."/>
            <person name="Ohara O."/>
            <person name="Isogai T."/>
            <person name="Sugano S."/>
        </authorList>
    </citation>
    <scope>NUCLEOTIDE SEQUENCE [LARGE SCALE MRNA] (ISOFORMS 1 AND 2)</scope>
    <source>
        <tissue>Retinoblastoma</tissue>
        <tissue>Testis</tissue>
    </source>
</reference>
<reference key="2">
    <citation type="submission" date="2004-06" db="EMBL/GenBank/DDBJ databases">
        <title>Cloning of human full open reading frames in Gateway(TM) system entry vector (pDONR201).</title>
        <authorList>
            <person name="Ebert L."/>
            <person name="Schick M."/>
            <person name="Neubert P."/>
            <person name="Schatten R."/>
            <person name="Henze S."/>
            <person name="Korn B."/>
        </authorList>
    </citation>
    <scope>NUCLEOTIDE SEQUENCE [LARGE SCALE MRNA] (ISOFORM 2)</scope>
</reference>
<reference key="3">
    <citation type="submission" date="2005-09" db="EMBL/GenBank/DDBJ databases">
        <authorList>
            <person name="Mural R.J."/>
            <person name="Istrail S."/>
            <person name="Sutton G.G."/>
            <person name="Florea L."/>
            <person name="Halpern A.L."/>
            <person name="Mobarry C.M."/>
            <person name="Lippert R."/>
            <person name="Walenz B."/>
            <person name="Shatkay H."/>
            <person name="Dew I."/>
            <person name="Miller J.R."/>
            <person name="Flanigan M.J."/>
            <person name="Edwards N.J."/>
            <person name="Bolanos R."/>
            <person name="Fasulo D."/>
            <person name="Halldorsson B.V."/>
            <person name="Hannenhalli S."/>
            <person name="Turner R."/>
            <person name="Yooseph S."/>
            <person name="Lu F."/>
            <person name="Nusskern D.R."/>
            <person name="Shue B.C."/>
            <person name="Zheng X.H."/>
            <person name="Zhong F."/>
            <person name="Delcher A.L."/>
            <person name="Huson D.H."/>
            <person name="Kravitz S.A."/>
            <person name="Mouchard L."/>
            <person name="Reinert K."/>
            <person name="Remington K.A."/>
            <person name="Clark A.G."/>
            <person name="Waterman M.S."/>
            <person name="Eichler E.E."/>
            <person name="Adams M.D."/>
            <person name="Hunkapiller M.W."/>
            <person name="Myers E.W."/>
            <person name="Venter J.C."/>
        </authorList>
    </citation>
    <scope>NUCLEOTIDE SEQUENCE [LARGE SCALE GENOMIC DNA]</scope>
</reference>
<reference key="4">
    <citation type="journal article" date="2004" name="Genome Res.">
        <title>The status, quality, and expansion of the NIH full-length cDNA project: the Mammalian Gene Collection (MGC).</title>
        <authorList>
            <consortium name="The MGC Project Team"/>
        </authorList>
    </citation>
    <scope>NUCLEOTIDE SEQUENCE [LARGE SCALE MRNA] (ISOFORMS 1 AND 3)</scope>
    <source>
        <tissue>Leiomyosarcoma</tissue>
        <tissue>Skin</tissue>
    </source>
</reference>
<reference key="5">
    <citation type="journal article" date="2013" name="J. Proteome Res.">
        <title>Toward a comprehensive characterization of a human cancer cell phosphoproteome.</title>
        <authorList>
            <person name="Zhou H."/>
            <person name="Di Palma S."/>
            <person name="Preisinger C."/>
            <person name="Peng M."/>
            <person name="Polat A.N."/>
            <person name="Heck A.J."/>
            <person name="Mohammed S."/>
        </authorList>
    </citation>
    <scope>PHOSPHORYLATION [LARGE SCALE ANALYSIS] AT SER-159</scope>
    <scope>IDENTIFICATION BY MASS SPECTROMETRY [LARGE SCALE ANALYSIS]</scope>
    <source>
        <tissue>Cervix carcinoma</tissue>
        <tissue>Erythroleukemia</tissue>
    </source>
</reference>
<dbReference type="EMBL" id="AK023971">
    <property type="protein sequence ID" value="BAB14745.1"/>
    <property type="molecule type" value="mRNA"/>
</dbReference>
<dbReference type="EMBL" id="AK301929">
    <property type="protein sequence ID" value="BAG63349.1"/>
    <property type="molecule type" value="mRNA"/>
</dbReference>
<dbReference type="EMBL" id="CR457319">
    <property type="protein sequence ID" value="CAG33600.1"/>
    <property type="molecule type" value="mRNA"/>
</dbReference>
<dbReference type="EMBL" id="CH471112">
    <property type="protein sequence ID" value="EAW85507.1"/>
    <property type="molecule type" value="Genomic_DNA"/>
</dbReference>
<dbReference type="EMBL" id="BC008882">
    <property type="protein sequence ID" value="AAH08882.1"/>
    <property type="molecule type" value="mRNA"/>
</dbReference>
<dbReference type="EMBL" id="BC018719">
    <property type="protein sequence ID" value="AAH18719.2"/>
    <property type="molecule type" value="mRNA"/>
</dbReference>
<dbReference type="CCDS" id="CCDS10468.2">
    <molecule id="Q7L2K0-1"/>
</dbReference>
<dbReference type="RefSeq" id="NP_079384.2">
    <molecule id="Q7L2K0-1"/>
    <property type="nucleotide sequence ID" value="NM_025108.3"/>
</dbReference>
<dbReference type="BioGRID" id="123160">
    <property type="interactions" value="26"/>
</dbReference>
<dbReference type="FunCoup" id="Q7L2K0">
    <property type="interactions" value="219"/>
</dbReference>
<dbReference type="IntAct" id="Q7L2K0">
    <property type="interactions" value="15"/>
</dbReference>
<dbReference type="MINT" id="Q7L2K0"/>
<dbReference type="STRING" id="9606.ENSP00000355022"/>
<dbReference type="GlyGen" id="Q7L2K0">
    <property type="glycosylation" value="1 site, 1 O-linked glycan (1 site)"/>
</dbReference>
<dbReference type="iPTMnet" id="Q7L2K0"/>
<dbReference type="PhosphoSitePlus" id="Q7L2K0"/>
<dbReference type="BioMuta" id="TEDC2"/>
<dbReference type="DMDM" id="121944421"/>
<dbReference type="jPOST" id="Q7L2K0"/>
<dbReference type="MassIVE" id="Q7L2K0"/>
<dbReference type="PaxDb" id="9606-ENSP00000355022"/>
<dbReference type="PeptideAtlas" id="Q7L2K0"/>
<dbReference type="ProteomicsDB" id="68763">
    <molecule id="Q7L2K0-1"/>
</dbReference>
<dbReference type="ProteomicsDB" id="68764">
    <molecule id="Q7L2K0-2"/>
</dbReference>
<dbReference type="ProteomicsDB" id="68765">
    <molecule id="Q7L2K0-3"/>
</dbReference>
<dbReference type="Pumba" id="Q7L2K0"/>
<dbReference type="Antibodypedia" id="62154">
    <property type="antibodies" value="21 antibodies from 9 providers"/>
</dbReference>
<dbReference type="DNASU" id="80178"/>
<dbReference type="Ensembl" id="ENST00000361837.9">
    <molecule id="Q7L2K0-1"/>
    <property type="protein sequence ID" value="ENSP00000355022.4"/>
    <property type="gene ID" value="ENSG00000162062.15"/>
</dbReference>
<dbReference type="Ensembl" id="ENST00000483320.5">
    <molecule id="Q7L2K0-2"/>
    <property type="protein sequence ID" value="ENSP00000456478.1"/>
    <property type="gene ID" value="ENSG00000162062.15"/>
</dbReference>
<dbReference type="GeneID" id="80178"/>
<dbReference type="KEGG" id="hsa:80178"/>
<dbReference type="MANE-Select" id="ENST00000361837.9">
    <property type="protein sequence ID" value="ENSP00000355022.4"/>
    <property type="RefSeq nucleotide sequence ID" value="NM_025108.3"/>
    <property type="RefSeq protein sequence ID" value="NP_079384.2"/>
</dbReference>
<dbReference type="UCSC" id="uc002cqh.4">
    <molecule id="Q7L2K0-1"/>
    <property type="organism name" value="human"/>
</dbReference>
<dbReference type="AGR" id="HGNC:25849"/>
<dbReference type="CTD" id="80178"/>
<dbReference type="DisGeNET" id="80178"/>
<dbReference type="GeneCards" id="TEDC2"/>
<dbReference type="HGNC" id="HGNC:25849">
    <property type="gene designation" value="TEDC2"/>
</dbReference>
<dbReference type="HPA" id="ENSG00000162062">
    <property type="expression patterns" value="Tissue enhanced (bone marrow, testis)"/>
</dbReference>
<dbReference type="neXtProt" id="NX_Q7L2K0"/>
<dbReference type="OpenTargets" id="ENSG00000162062"/>
<dbReference type="PharmGKB" id="PA143485396"/>
<dbReference type="VEuPathDB" id="HostDB:ENSG00000162062"/>
<dbReference type="eggNOG" id="ENOG502S5GP">
    <property type="taxonomic scope" value="Eukaryota"/>
</dbReference>
<dbReference type="GeneTree" id="ENSGT00390000011149"/>
<dbReference type="HOGENOM" id="CLU_052591_0_0_1"/>
<dbReference type="InParanoid" id="Q7L2K0"/>
<dbReference type="OMA" id="MLKAPYK"/>
<dbReference type="OrthoDB" id="9939072at2759"/>
<dbReference type="PAN-GO" id="Q7L2K0">
    <property type="GO annotations" value="0 GO annotations based on evolutionary models"/>
</dbReference>
<dbReference type="PhylomeDB" id="Q7L2K0"/>
<dbReference type="TreeFam" id="TF337397"/>
<dbReference type="PathwayCommons" id="Q7L2K0"/>
<dbReference type="SignaLink" id="Q7L2K0"/>
<dbReference type="BioGRID-ORCS" id="80178">
    <property type="hits" value="266 hits in 1135 CRISPR screens"/>
</dbReference>
<dbReference type="GenomeRNAi" id="80178"/>
<dbReference type="Pharos" id="Q7L2K0">
    <property type="development level" value="Tdark"/>
</dbReference>
<dbReference type="PRO" id="PR:Q7L2K0"/>
<dbReference type="Proteomes" id="UP000005640">
    <property type="component" value="Chromosome 16"/>
</dbReference>
<dbReference type="RNAct" id="Q7L2K0">
    <property type="molecule type" value="protein"/>
</dbReference>
<dbReference type="Bgee" id="ENSG00000162062">
    <property type="expression patterns" value="Expressed in primordial germ cell in gonad and 95 other cell types or tissues"/>
</dbReference>
<dbReference type="ExpressionAtlas" id="Q7L2K0">
    <property type="expression patterns" value="baseline and differential"/>
</dbReference>
<dbReference type="GO" id="GO:0005814">
    <property type="term" value="C:centriole"/>
    <property type="evidence" value="ECO:0000250"/>
    <property type="project" value="UniProtKB"/>
</dbReference>
<dbReference type="GO" id="GO:0005929">
    <property type="term" value="C:cilium"/>
    <property type="evidence" value="ECO:0000250"/>
    <property type="project" value="UniProtKB"/>
</dbReference>
<dbReference type="GO" id="GO:0005737">
    <property type="term" value="C:cytoplasm"/>
    <property type="evidence" value="ECO:0007669"/>
    <property type="project" value="UniProtKB-KW"/>
</dbReference>
<dbReference type="GO" id="GO:0045880">
    <property type="term" value="P:positive regulation of smoothened signaling pathway"/>
    <property type="evidence" value="ECO:0000250"/>
    <property type="project" value="UniProtKB"/>
</dbReference>
<dbReference type="InterPro" id="IPR031518">
    <property type="entry name" value="DUF4693"/>
</dbReference>
<dbReference type="PANTHER" id="PTHR14870">
    <property type="entry name" value="TUBULIN EPSILON AND DELTA COMPLEX PROTEIN 2"/>
    <property type="match status" value="1"/>
</dbReference>
<dbReference type="PANTHER" id="PTHR14870:SF1">
    <property type="entry name" value="TUBULIN EPSILON AND DELTA COMPLEX PROTEIN 2"/>
    <property type="match status" value="1"/>
</dbReference>
<dbReference type="Pfam" id="PF15764">
    <property type="entry name" value="DUF4693"/>
    <property type="match status" value="1"/>
</dbReference>
<accession>Q7L2K0</accession>
<accession>B4DXD7</accession>
<accession>Q96H61</accession>
<accession>Q9H872</accession>
<protein>
    <recommendedName>
        <fullName evidence="6">Tubulin epsilon and delta complex protein 2</fullName>
    </recommendedName>
</protein>
<organism>
    <name type="scientific">Homo sapiens</name>
    <name type="common">Human</name>
    <dbReference type="NCBI Taxonomy" id="9606"/>
    <lineage>
        <taxon>Eukaryota</taxon>
        <taxon>Metazoa</taxon>
        <taxon>Chordata</taxon>
        <taxon>Craniata</taxon>
        <taxon>Vertebrata</taxon>
        <taxon>Euteleostomi</taxon>
        <taxon>Mammalia</taxon>
        <taxon>Eutheria</taxon>
        <taxon>Euarchontoglires</taxon>
        <taxon>Primates</taxon>
        <taxon>Haplorrhini</taxon>
        <taxon>Catarrhini</taxon>
        <taxon>Hominidae</taxon>
        <taxon>Homo</taxon>
    </lineage>
</organism>
<gene>
    <name evidence="7" type="primary">TEDC2</name>
    <name evidence="7" type="synonym">C16orf59</name>
</gene>
<evidence type="ECO:0000250" key="1">
    <source>
        <dbReference type="UniProtKB" id="Q6GQV0"/>
    </source>
</evidence>
<evidence type="ECO:0000256" key="2">
    <source>
        <dbReference type="SAM" id="MobiDB-lite"/>
    </source>
</evidence>
<evidence type="ECO:0000303" key="3">
    <source>
    </source>
</evidence>
<evidence type="ECO:0000303" key="4">
    <source>
    </source>
</evidence>
<evidence type="ECO:0000303" key="5">
    <source ref="2"/>
</evidence>
<evidence type="ECO:0000305" key="6"/>
<evidence type="ECO:0000312" key="7">
    <source>
        <dbReference type="HGNC" id="HGNC:25849"/>
    </source>
</evidence>
<evidence type="ECO:0007744" key="8">
    <source>
    </source>
</evidence>
<keyword id="KW-0025">Alternative splicing</keyword>
<keyword id="KW-0966">Cell projection</keyword>
<keyword id="KW-0963">Cytoplasm</keyword>
<keyword id="KW-0206">Cytoskeleton</keyword>
<keyword id="KW-0597">Phosphoprotein</keyword>
<keyword id="KW-1267">Proteomics identification</keyword>
<keyword id="KW-1185">Reference proteome</keyword>
<name>TEDC2_HUMAN</name>
<feature type="chain" id="PRO_0000286557" description="Tubulin epsilon and delta complex protein 2">
    <location>
        <begin position="1"/>
        <end position="433"/>
    </location>
</feature>
<feature type="region of interest" description="Disordered" evidence="2">
    <location>
        <begin position="45"/>
        <end position="69"/>
    </location>
</feature>
<feature type="region of interest" description="Disordered" evidence="2">
    <location>
        <begin position="95"/>
        <end position="169"/>
    </location>
</feature>
<feature type="region of interest" description="Disordered" evidence="2">
    <location>
        <begin position="326"/>
        <end position="345"/>
    </location>
</feature>
<feature type="compositionally biased region" description="Polar residues" evidence="2">
    <location>
        <begin position="107"/>
        <end position="120"/>
    </location>
</feature>
<feature type="compositionally biased region" description="Pro residues" evidence="2">
    <location>
        <begin position="327"/>
        <end position="339"/>
    </location>
</feature>
<feature type="modified residue" description="Phosphoserine" evidence="8">
    <location>
        <position position="159"/>
    </location>
</feature>
<feature type="splice variant" id="VSP_025086" description="In isoform 2 and isoform 3." evidence="3 4 5">
    <location>
        <begin position="1"/>
        <end position="167"/>
    </location>
</feature>
<feature type="splice variant" id="VSP_025087" description="In isoform 3." evidence="4">
    <original>VAEQPPRPCPVGRPPGASPSCGGRAEPAWSPQLLVYSSTQ</original>
    <variation>PRSCRPWRPSSCEWLCWTSRSTWKRCFWKRRWGCNRGPQP</variation>
    <location>
        <begin position="323"/>
        <end position="362"/>
    </location>
</feature>
<feature type="splice variant" id="VSP_025088" description="In isoform 3." evidence="4">
    <location>
        <begin position="363"/>
        <end position="433"/>
    </location>
</feature>
<feature type="sequence variant" id="VAR_032115" description="In dbSNP:rs34948268.">
    <original>R</original>
    <variation>K</variation>
    <location>
        <position position="346"/>
    </location>
</feature>
<sequence>MLPAGCSRRLVAELQGALDACAQRQLQLEQSLRVCRRLLHAWEPTGTRALKPPPGPETNGEDPLPACTPSPQDLKELEFLTQALEKAVRVRRGITKAGERDKAPSLKSRSIVTSSGTTASAPPHSPGQAGGHASDTRPTKGLRQTTVPAKGHPERRLLSVGDGTRVGMGARTPRPGAGLRDQQMAPSAAPQAPEAFTLKEKGHLLRLPAAFRKAASQNSSLWAQLSSTQTSDSTDAAAAKTQFLQNMQTASGGPQPRLSAVEVEAEAGRLRKACSLLRLRMREELSAAPMDWMQEYRCLLTLEGLQAMVGQCLHRLQELRAAVAEQPPRPCPVGRPPGASPSCGGRAEPAWSPQLLVYSSTQELQTLAALKLRVAVLDQQIHLEKVLMAELLPLVSAAQPQGPPWLALCRAVHSLLCEGGARVLTILRDEPAV</sequence>
<proteinExistence type="evidence at protein level"/>